<keyword id="KW-0328">Glycosyltransferase</keyword>
<keyword id="KW-0337">GPI-anchor biosynthesis</keyword>
<keyword id="KW-0472">Membrane</keyword>
<keyword id="KW-1185">Reference proteome</keyword>
<keyword id="KW-0808">Transferase</keyword>
<keyword id="KW-0812">Transmembrane</keyword>
<keyword id="KW-1133">Transmembrane helix</keyword>
<protein>
    <recommendedName>
        <fullName>Phosphatidylinositol N-acetylglucosaminyltransferase subunit GPI1</fullName>
        <shortName>GPI-GlcNAc transferase complex subunit GPI1</shortName>
        <shortName>GPI-GnT subunit GPI1</shortName>
        <ecNumber>2.4.1.198</ecNumber>
    </recommendedName>
</protein>
<accession>P53306</accession>
<accession>D6VUZ9</accession>
<evidence type="ECO:0000255" key="1"/>
<evidence type="ECO:0000269" key="2">
    <source>
    </source>
</evidence>
<evidence type="ECO:0000305" key="3"/>
<evidence type="ECO:0000305" key="4">
    <source>
    </source>
</evidence>
<evidence type="ECO:0000305" key="5">
    <source>
    </source>
</evidence>
<proteinExistence type="evidence at protein level"/>
<gene>
    <name type="primary">GPI1</name>
    <name type="ordered locus">YGR216C</name>
</gene>
<feature type="chain" id="PRO_0000215666" description="Phosphatidylinositol N-acetylglucosaminyltransferase subunit GPI1">
    <location>
        <begin position="1"/>
        <end position="609"/>
    </location>
</feature>
<feature type="topological domain" description="Extracellular" evidence="1">
    <location>
        <begin position="1"/>
        <end position="186"/>
    </location>
</feature>
<feature type="transmembrane region" description="Helical" evidence="1">
    <location>
        <begin position="187"/>
        <end position="207"/>
    </location>
</feature>
<feature type="topological domain" description="Cytoplasmic" evidence="1">
    <location>
        <begin position="208"/>
        <end position="280"/>
    </location>
</feature>
<feature type="transmembrane region" description="Helical" evidence="1">
    <location>
        <begin position="281"/>
        <end position="301"/>
    </location>
</feature>
<feature type="topological domain" description="Extracellular" evidence="1">
    <location>
        <begin position="302"/>
        <end position="380"/>
    </location>
</feature>
<feature type="transmembrane region" description="Helical" evidence="1">
    <location>
        <begin position="381"/>
        <end position="401"/>
    </location>
</feature>
<feature type="topological domain" description="Cytoplasmic" evidence="1">
    <location>
        <begin position="402"/>
        <end position="451"/>
    </location>
</feature>
<feature type="transmembrane region" description="Helical" evidence="1">
    <location>
        <begin position="452"/>
        <end position="472"/>
    </location>
</feature>
<feature type="topological domain" description="Extracellular" evidence="1">
    <location>
        <begin position="473"/>
        <end position="485"/>
    </location>
</feature>
<feature type="transmembrane region" description="Helical" evidence="1">
    <location>
        <begin position="486"/>
        <end position="506"/>
    </location>
</feature>
<feature type="topological domain" description="Cytoplasmic" evidence="1">
    <location>
        <begin position="507"/>
        <end position="609"/>
    </location>
</feature>
<organism>
    <name type="scientific">Saccharomyces cerevisiae (strain ATCC 204508 / S288c)</name>
    <name type="common">Baker's yeast</name>
    <dbReference type="NCBI Taxonomy" id="559292"/>
    <lineage>
        <taxon>Eukaryota</taxon>
        <taxon>Fungi</taxon>
        <taxon>Dikarya</taxon>
        <taxon>Ascomycota</taxon>
        <taxon>Saccharomycotina</taxon>
        <taxon>Saccharomycetes</taxon>
        <taxon>Saccharomycetales</taxon>
        <taxon>Saccharomycetaceae</taxon>
        <taxon>Saccharomyces</taxon>
    </lineage>
</organism>
<sequence>MPNYIFWPYESLFENSAAQGPQVALAISFEKTHFVVLGVCEPQYLEEVSIRPPYSVVATKNNGAEGWNYKVADPCNVHFRIPKLKFMQFYSSDPISLIIPEKEVGLHSSVGETLNYSKLEQHPRYKRDNKKLSETLNIINLFPAYCKALNELYPFIQTSQENLRGTMLNSVAAWCSSTCIYKMVAKIGFYLTFVICSIASLVSSLLNYSHFQLVNYSAFVQQIDLRCQQICYFPVQYERINKKDNIQNVGSMVEKDNSNSQFSHSYMPSKFYPDYILLYNTIWLIINDISFGLILGAILIENRDFLVSASHRVLKFFLYDSLKTITETLANNPLGIKLNAELANFLSELFLWVIEFSYTTFIKRLIDPKTLSSLLTLTIYMMFLVGFSFAVSLAIDFFAILSFPIYVFYRISSKLYHCQLNIMASLFNLFCGKKRNVLRNRIDHNYFQLDQLLLGTLLFIILVFLTPTVMAFYMSYTVLRMLTITIEIFSEAVIALINHFPLFALLLRLKDPKRLPGGISIELKTTVSNKHTTLELQNNPIKFKSMFRPYNLLLSQMRTNYFSFATVRKIVRGESIMVNRNKLYYVLYSSLPSKPLSVKDLYKRLTIQA</sequence>
<dbReference type="EC" id="2.4.1.198"/>
<dbReference type="EMBL" id="U66864">
    <property type="protein sequence ID" value="AAB17870.1"/>
    <property type="molecule type" value="Genomic_DNA"/>
</dbReference>
<dbReference type="EMBL" id="Z73001">
    <property type="protein sequence ID" value="CAA97243.1"/>
    <property type="molecule type" value="Genomic_DNA"/>
</dbReference>
<dbReference type="EMBL" id="BK006941">
    <property type="protein sequence ID" value="DAA08310.1"/>
    <property type="molecule type" value="Genomic_DNA"/>
</dbReference>
<dbReference type="PIR" id="S64539">
    <property type="entry name" value="S64539"/>
</dbReference>
<dbReference type="RefSeq" id="NP_011732.1">
    <property type="nucleotide sequence ID" value="NM_001181345.1"/>
</dbReference>
<dbReference type="BioGRID" id="33469">
    <property type="interactions" value="150"/>
</dbReference>
<dbReference type="ComplexPortal" id="CPX-1274">
    <property type="entry name" value="Glycosylphosphatidylinositol-N-acetylglucosaminyltransferase complex"/>
</dbReference>
<dbReference type="DIP" id="DIP-7773N"/>
<dbReference type="FunCoup" id="P53306">
    <property type="interactions" value="122"/>
</dbReference>
<dbReference type="IntAct" id="P53306">
    <property type="interactions" value="4"/>
</dbReference>
<dbReference type="MINT" id="P53306"/>
<dbReference type="STRING" id="4932.YGR216C"/>
<dbReference type="PaxDb" id="4932-YGR216C"/>
<dbReference type="PeptideAtlas" id="P53306"/>
<dbReference type="EnsemblFungi" id="YGR216C_mRNA">
    <property type="protein sequence ID" value="YGR216C"/>
    <property type="gene ID" value="YGR216C"/>
</dbReference>
<dbReference type="GeneID" id="853130"/>
<dbReference type="KEGG" id="sce:YGR216C"/>
<dbReference type="AGR" id="SGD:S000003448"/>
<dbReference type="SGD" id="S000003448">
    <property type="gene designation" value="GPI1"/>
</dbReference>
<dbReference type="VEuPathDB" id="FungiDB:YGR216C"/>
<dbReference type="eggNOG" id="KOG1183">
    <property type="taxonomic scope" value="Eukaryota"/>
</dbReference>
<dbReference type="GeneTree" id="ENSGT00390000004994"/>
<dbReference type="HOGENOM" id="CLU_007914_3_0_1"/>
<dbReference type="InParanoid" id="P53306"/>
<dbReference type="OMA" id="CFWPVQY"/>
<dbReference type="OrthoDB" id="70250at2759"/>
<dbReference type="BioCyc" id="YEAST:G3O-30898-MONOMER"/>
<dbReference type="UniPathway" id="UPA00196"/>
<dbReference type="BioGRID-ORCS" id="853130">
    <property type="hits" value="3 hits in 10 CRISPR screens"/>
</dbReference>
<dbReference type="PRO" id="PR:P53306"/>
<dbReference type="Proteomes" id="UP000002311">
    <property type="component" value="Chromosome VII"/>
</dbReference>
<dbReference type="RNAct" id="P53306">
    <property type="molecule type" value="protein"/>
</dbReference>
<dbReference type="GO" id="GO:0005783">
    <property type="term" value="C:endoplasmic reticulum"/>
    <property type="evidence" value="ECO:0007005"/>
    <property type="project" value="SGD"/>
</dbReference>
<dbReference type="GO" id="GO:0005789">
    <property type="term" value="C:endoplasmic reticulum membrane"/>
    <property type="evidence" value="ECO:0000303"/>
    <property type="project" value="ComplexPortal"/>
</dbReference>
<dbReference type="GO" id="GO:0000506">
    <property type="term" value="C:glycosylphosphatidylinositol-N-acetylglucosaminyltransferase (GPI-GnT) complex"/>
    <property type="evidence" value="ECO:0000316"/>
    <property type="project" value="SGD"/>
</dbReference>
<dbReference type="GO" id="GO:0017176">
    <property type="term" value="F:phosphatidylinositol N-acetylglucosaminyltransferase activity"/>
    <property type="evidence" value="ECO:0007669"/>
    <property type="project" value="UniProtKB-EC"/>
</dbReference>
<dbReference type="GO" id="GO:0031505">
    <property type="term" value="P:fungal-type cell wall organization"/>
    <property type="evidence" value="ECO:0000303"/>
    <property type="project" value="ComplexPortal"/>
</dbReference>
<dbReference type="GO" id="GO:0006506">
    <property type="term" value="P:GPI anchor biosynthetic process"/>
    <property type="evidence" value="ECO:0000314"/>
    <property type="project" value="SGD"/>
</dbReference>
<dbReference type="InterPro" id="IPR007720">
    <property type="entry name" value="PigQ/GPI1"/>
</dbReference>
<dbReference type="PANTHER" id="PTHR21329:SF3">
    <property type="entry name" value="PHOSPHATIDYLINOSITOL N-ACETYLGLUCOSAMINYLTRANSFERASE SUBUNIT Q"/>
    <property type="match status" value="1"/>
</dbReference>
<dbReference type="PANTHER" id="PTHR21329">
    <property type="entry name" value="PHOSPHATIDYLINOSITOL N-ACETYLGLUCOSAMINYLTRANSFERASE SUBUNIT Q-RELATED"/>
    <property type="match status" value="1"/>
</dbReference>
<dbReference type="Pfam" id="PF05024">
    <property type="entry name" value="Gpi1"/>
    <property type="match status" value="1"/>
</dbReference>
<comment type="function">
    <text evidence="2">Part of the complex catalyzing the transfer of N-acetylglucosamine from UDP-N-acetylglucosamine to phosphatidylinositol, the first step of GPI biosynthesis.</text>
</comment>
<comment type="catalytic activity">
    <reaction>
        <text>a 1,2-diacyl-sn-glycero-3-phospho-(1D-myo-inositol) + UDP-N-acetyl-alpha-D-glucosamine = a 6-(N-acetyl-alpha-D-glucosaminyl)-1-(1,2-diacyl-sn-glycero-3-phospho)-1D-myo-inositol + UDP + H(+)</text>
        <dbReference type="Rhea" id="RHEA:14789"/>
        <dbReference type="ChEBI" id="CHEBI:15378"/>
        <dbReference type="ChEBI" id="CHEBI:57265"/>
        <dbReference type="ChEBI" id="CHEBI:57705"/>
        <dbReference type="ChEBI" id="CHEBI:57880"/>
        <dbReference type="ChEBI" id="CHEBI:58223"/>
        <dbReference type="EC" id="2.4.1.198"/>
    </reaction>
</comment>
<comment type="pathway">
    <text evidence="5">Glycolipid biosynthesis; glycosylphosphatidylinositol-anchor biosynthesis.</text>
</comment>
<comment type="subunit">
    <text evidence="4">Component of the phosphatidylinositol N-acetylglucosaminyltransferase (GPI-GlcNAc transferase) complex composed of at least GPI1, GPI2, GPI3, GPI15, GPI19 and ERI1.</text>
</comment>
<comment type="subcellular location">
    <subcellularLocation>
        <location evidence="3">Membrane</location>
        <topology evidence="3">Multi-pass membrane protein</topology>
    </subcellularLocation>
</comment>
<comment type="similarity">
    <text evidence="3">Belongs to the PIGQ family.</text>
</comment>
<name>GPI1_YEAST</name>
<reference key="1">
    <citation type="journal article" date="1996" name="J. Biol. Chem.">
        <title>Gpi1, a Saccharomyces cerevisiae protein that participates in the first step in glycosylphosphatidylinositol anchor synthesis.</title>
        <authorList>
            <person name="Leidich S.D."/>
            <person name="Orlean P."/>
        </authorList>
    </citation>
    <scope>NUCLEOTIDE SEQUENCE [GENOMIC DNA]</scope>
    <scope>FUNCTION</scope>
</reference>
<reference key="2">
    <citation type="journal article" date="1997" name="Yeast">
        <title>Sequence analysis of 203 kilobases from Saccharomyces cerevisiae chromosome VII.</title>
        <authorList>
            <person name="Rieger M."/>
            <person name="Brueckner M."/>
            <person name="Schaefer M."/>
            <person name="Mueller-Auer S."/>
        </authorList>
    </citation>
    <scope>NUCLEOTIDE SEQUENCE [GENOMIC DNA]</scope>
    <source>
        <strain>ATCC 204508 / S288c</strain>
    </source>
</reference>
<reference key="3">
    <citation type="journal article" date="1997" name="Nature">
        <title>The nucleotide sequence of Saccharomyces cerevisiae chromosome VII.</title>
        <authorList>
            <person name="Tettelin H."/>
            <person name="Agostoni-Carbone M.L."/>
            <person name="Albermann K."/>
            <person name="Albers M."/>
            <person name="Arroyo J."/>
            <person name="Backes U."/>
            <person name="Barreiros T."/>
            <person name="Bertani I."/>
            <person name="Bjourson A.J."/>
            <person name="Brueckner M."/>
            <person name="Bruschi C.V."/>
            <person name="Carignani G."/>
            <person name="Castagnoli L."/>
            <person name="Cerdan E."/>
            <person name="Clemente M.L."/>
            <person name="Coblenz A."/>
            <person name="Coglievina M."/>
            <person name="Coissac E."/>
            <person name="Defoor E."/>
            <person name="Del Bino S."/>
            <person name="Delius H."/>
            <person name="Delneri D."/>
            <person name="de Wergifosse P."/>
            <person name="Dujon B."/>
            <person name="Durand P."/>
            <person name="Entian K.-D."/>
            <person name="Eraso P."/>
            <person name="Escribano V."/>
            <person name="Fabiani L."/>
            <person name="Fartmann B."/>
            <person name="Feroli F."/>
            <person name="Feuermann M."/>
            <person name="Frontali L."/>
            <person name="Garcia-Gonzalez M."/>
            <person name="Garcia-Saez M.I."/>
            <person name="Goffeau A."/>
            <person name="Guerreiro P."/>
            <person name="Hani J."/>
            <person name="Hansen M."/>
            <person name="Hebling U."/>
            <person name="Hernandez K."/>
            <person name="Heumann K."/>
            <person name="Hilger F."/>
            <person name="Hofmann B."/>
            <person name="Indge K.J."/>
            <person name="James C.M."/>
            <person name="Klima R."/>
            <person name="Koetter P."/>
            <person name="Kramer B."/>
            <person name="Kramer W."/>
            <person name="Lauquin G."/>
            <person name="Leuther H."/>
            <person name="Louis E.J."/>
            <person name="Maillier E."/>
            <person name="Marconi A."/>
            <person name="Martegani E."/>
            <person name="Mazon M.J."/>
            <person name="Mazzoni C."/>
            <person name="McReynolds A.D.K."/>
            <person name="Melchioretto P."/>
            <person name="Mewes H.-W."/>
            <person name="Minenkova O."/>
            <person name="Mueller-Auer S."/>
            <person name="Nawrocki A."/>
            <person name="Netter P."/>
            <person name="Neu R."/>
            <person name="Nombela C."/>
            <person name="Oliver S.G."/>
            <person name="Panzeri L."/>
            <person name="Paoluzi S."/>
            <person name="Plevani P."/>
            <person name="Portetelle D."/>
            <person name="Portillo F."/>
            <person name="Potier S."/>
            <person name="Purnelle B."/>
            <person name="Rieger M."/>
            <person name="Riles L."/>
            <person name="Rinaldi T."/>
            <person name="Robben J."/>
            <person name="Rodrigues-Pousada C."/>
            <person name="Rodriguez-Belmonte E."/>
            <person name="Rodriguez-Torres A.M."/>
            <person name="Rose M."/>
            <person name="Ruzzi M."/>
            <person name="Saliola M."/>
            <person name="Sanchez-Perez M."/>
            <person name="Schaefer B."/>
            <person name="Schaefer M."/>
            <person name="Scharfe M."/>
            <person name="Schmidheini T."/>
            <person name="Schreer A."/>
            <person name="Skala J."/>
            <person name="Souciet J.-L."/>
            <person name="Steensma H.Y."/>
            <person name="Talla E."/>
            <person name="Thierry A."/>
            <person name="Vandenbol M."/>
            <person name="van der Aart Q.J.M."/>
            <person name="Van Dyck L."/>
            <person name="Vanoni M."/>
            <person name="Verhasselt P."/>
            <person name="Voet M."/>
            <person name="Volckaert G."/>
            <person name="Wambutt R."/>
            <person name="Watson M.D."/>
            <person name="Weber N."/>
            <person name="Wedler E."/>
            <person name="Wedler H."/>
            <person name="Wipfli P."/>
            <person name="Wolf K."/>
            <person name="Wright L.F."/>
            <person name="Zaccaria P."/>
            <person name="Zimmermann M."/>
            <person name="Zollner A."/>
            <person name="Kleine K."/>
        </authorList>
    </citation>
    <scope>NUCLEOTIDE SEQUENCE [LARGE SCALE GENOMIC DNA]</scope>
    <source>
        <strain>ATCC 204508 / S288c</strain>
    </source>
</reference>
<reference key="4">
    <citation type="journal article" date="2014" name="G3 (Bethesda)">
        <title>The reference genome sequence of Saccharomyces cerevisiae: Then and now.</title>
        <authorList>
            <person name="Engel S.R."/>
            <person name="Dietrich F.S."/>
            <person name="Fisk D.G."/>
            <person name="Binkley G."/>
            <person name="Balakrishnan R."/>
            <person name="Costanzo M.C."/>
            <person name="Dwight S.S."/>
            <person name="Hitz B.C."/>
            <person name="Karra K."/>
            <person name="Nash R.S."/>
            <person name="Weng S."/>
            <person name="Wong E.D."/>
            <person name="Lloyd P."/>
            <person name="Skrzypek M.S."/>
            <person name="Miyasato S.R."/>
            <person name="Simison M."/>
            <person name="Cherry J.M."/>
        </authorList>
    </citation>
    <scope>GENOME REANNOTATION</scope>
    <source>
        <strain>ATCC 204508 / S288c</strain>
    </source>
</reference>
<reference key="5">
    <citation type="journal article" date="2004" name="Cell">
        <title>Yeast Ras regulates the complex that catalyzes the first step in GPI-anchor biosynthesis at the ER.</title>
        <authorList>
            <person name="Sobering A.K."/>
            <person name="Watanabe R."/>
            <person name="Romeo M.J."/>
            <person name="Yan B.C."/>
            <person name="Specht C.A."/>
            <person name="Orlean P."/>
            <person name="Riezman H."/>
            <person name="Levin D.E."/>
        </authorList>
    </citation>
    <scope>PROBABLE COMPOSITION OF THE COMPLEX</scope>
</reference>
<reference key="6">
    <citation type="journal article" date="2006" name="Proc. Natl. Acad. Sci. U.S.A.">
        <title>A global topology map of the Saccharomyces cerevisiae membrane proteome.</title>
        <authorList>
            <person name="Kim H."/>
            <person name="Melen K."/>
            <person name="Oesterberg M."/>
            <person name="von Heijne G."/>
        </authorList>
    </citation>
    <scope>TOPOLOGY [LARGE SCALE ANALYSIS]</scope>
    <source>
        <strain>ATCC 208353 / W303-1A</strain>
    </source>
</reference>